<dbReference type="EMBL" id="X14307">
    <property type="protein sequence ID" value="CAA32488.1"/>
    <property type="status" value="ALT_FRAME"/>
    <property type="molecule type" value="Genomic_DNA"/>
</dbReference>
<dbReference type="PIR" id="S07993">
    <property type="entry name" value="S07993"/>
</dbReference>
<dbReference type="PDB" id="4ZFZ">
    <property type="method" value="X-ray"/>
    <property type="resolution" value="1.76 A"/>
    <property type="chains" value="C/F/I/L=2-6"/>
</dbReference>
<dbReference type="PDBsum" id="4ZFZ"/>
<dbReference type="SMR" id="P12482"/>
<dbReference type="Proteomes" id="UP000008173">
    <property type="component" value="Segment"/>
</dbReference>
<dbReference type="GO" id="GO:0020002">
    <property type="term" value="C:host cell plasma membrane"/>
    <property type="evidence" value="ECO:0007669"/>
    <property type="project" value="UniProtKB-SubCell"/>
</dbReference>
<dbReference type="GO" id="GO:0016020">
    <property type="term" value="C:membrane"/>
    <property type="evidence" value="ECO:0007669"/>
    <property type="project" value="UniProtKB-KW"/>
</dbReference>
<dbReference type="GO" id="GO:0005525">
    <property type="term" value="F:GTP binding"/>
    <property type="evidence" value="ECO:0007669"/>
    <property type="project" value="InterPro"/>
</dbReference>
<dbReference type="Gene3D" id="3.30.62.10">
    <property type="entry name" value="Nef Regulatory Factor"/>
    <property type="match status" value="1"/>
</dbReference>
<dbReference type="InterPro" id="IPR027481">
    <property type="entry name" value="HIV-1_Nef_core_sf"/>
</dbReference>
<dbReference type="InterPro" id="IPR001558">
    <property type="entry name" value="HIV_Nef"/>
</dbReference>
<dbReference type="Pfam" id="PF00469">
    <property type="entry name" value="F-protein"/>
    <property type="match status" value="1"/>
</dbReference>
<dbReference type="SUPFAM" id="SSF55671">
    <property type="entry name" value="Regulatory factor Nef"/>
    <property type="match status" value="1"/>
</dbReference>
<proteinExistence type="evidence at protein level"/>
<name>NEF_SIVS4</name>
<gene>
    <name type="primary">nef</name>
</gene>
<protein>
    <recommendedName>
        <fullName>Protein Nef</fullName>
    </recommendedName>
    <alternativeName>
        <fullName>3'ORF</fullName>
    </alternativeName>
    <alternativeName>
        <fullName>Negative factor</fullName>
        <shortName>F-protein</shortName>
    </alternativeName>
</protein>
<comment type="function">
    <text evidence="1">Seems to play a role in optimizing the host cell environment for viral replication without causing cell death by apoptosis. Enhances virus infectivity and pathogenicity. Probably involved in viral immune evasion mechanisms (By similarity).</text>
</comment>
<comment type="function">
    <text evidence="5">In infected CD4(+) T-lymphocytes, down-regulates cell surface expression of CD4, CD28, CD3, and MHC-I or MHC-II molecules.</text>
</comment>
<comment type="function">
    <text evidence="2">Interferes with TCR signaling from the cell membrane. Interacts with CD247/TCRZ (TCR zeta chain) and exert potent down-regulation of cell surface TCR/CD3 complexes.</text>
</comment>
<comment type="subunit">
    <text evidence="1 3">Homodimer (By similarity). Interacts with host CD247/TCRZ; this interaction induces down-regulation of cell surface TCR/CD3 complexes.</text>
</comment>
<comment type="subcellular location">
    <subcellularLocation>
        <location evidence="1">Host cell membrane</location>
        <topology evidence="1">Lipid-anchor</topology>
        <orientation evidence="1">Cytoplasmic side</orientation>
    </subcellularLocation>
    <text evidence="1">Associates with the inner plasma membrane through its N-terminal domain.</text>
</comment>
<comment type="domain">
    <text evidence="1">The N-terminal domain is composed of the N-myristoyl glycine and of a cluster of positively charged amino acids. It is required for inner plasma membrane targeting of Nef (By similarity).</text>
</comment>
<comment type="similarity">
    <text evidence="4">Belongs to the lentivirus primate group Nef protein family.</text>
</comment>
<comment type="sequence caution" evidence="4">
    <conflict type="frameshift">
        <sequence resource="EMBL-CDS" id="CAA32488"/>
    </conflict>
</comment>
<keyword id="KW-0002">3D-structure</keyword>
<keyword id="KW-1032">Host cell membrane</keyword>
<keyword id="KW-1043">Host membrane</keyword>
<keyword id="KW-0945">Host-virus interaction</keyword>
<keyword id="KW-0449">Lipoprotein</keyword>
<keyword id="KW-0472">Membrane</keyword>
<keyword id="KW-0519">Myristate</keyword>
<keyword id="KW-0899">Viral immunoevasion</keyword>
<keyword id="KW-0843">Virulence</keyword>
<organismHost>
    <name type="scientific">Cercopithecidae</name>
    <name type="common">Old World monkeys</name>
    <dbReference type="NCBI Taxonomy" id="9527"/>
</organismHost>
<reference key="1">
    <citation type="journal article" date="1989" name="Nature">
        <title>An African primate lentivirus (SIVsm) closely related to HIV-2.</title>
        <authorList>
            <person name="Hirsch V.M."/>
            <person name="Olmstead R.A."/>
            <person name="Murphey-Corb M."/>
            <person name="Purcell R.H."/>
            <person name="Johnson P.R."/>
        </authorList>
    </citation>
    <scope>NUCLEOTIDE SEQUENCE [GENOMIC DNA]</scope>
</reference>
<reference key="2">
    <citation type="journal article" date="1998" name="J. Virol.">
        <title>Zeta chain of the T-cell receptor interacts with nef of simian immunodeficiency virus and human immunodeficiency virus type 2.</title>
        <authorList>
            <person name="Howe A.Y."/>
            <person name="Jung J.U."/>
            <person name="Desrosiers R.C."/>
        </authorList>
    </citation>
    <scope>INTERACTION WITH HOST CD247/TCRZ</scope>
</reference>
<reference key="3">
    <citation type="journal article" date="2005" name="J. Virol.">
        <title>Primary sooty mangabey simian immunodeficiency virus and human immunodeficiency virus type 2 nef alleles modulate cell surface expression of various human receptors and enhance viral infectivity and replication.</title>
        <authorList>
            <person name="Munch J."/>
            <person name="Schindler M."/>
            <person name="Wildum S."/>
            <person name="Rucker E."/>
            <person name="Bailer N."/>
            <person name="Knoop V."/>
            <person name="Novembre F.J."/>
            <person name="Kirchhoff F."/>
        </authorList>
    </citation>
    <scope>FUNCTION</scope>
</reference>
<organism>
    <name type="scientific">Simian immunodeficiency virus (isolate F236/smH4)</name>
    <name type="common">SIV-sm</name>
    <name type="synonym">Simian immunodeficiency virus sooty mangabey monkey</name>
    <dbReference type="NCBI Taxonomy" id="11737"/>
    <lineage>
        <taxon>Viruses</taxon>
        <taxon>Riboviria</taxon>
        <taxon>Pararnavirae</taxon>
        <taxon>Artverviricota</taxon>
        <taxon>Revtraviricetes</taxon>
        <taxon>Ortervirales</taxon>
        <taxon>Retroviridae</taxon>
        <taxon>Orthoretrovirinae</taxon>
        <taxon>Lentivirus</taxon>
        <taxon>Simian immunodeficiency virus</taxon>
    </lineage>
</organism>
<feature type="initiator methionine" description="Removed; by host" evidence="1">
    <location>
        <position position="1"/>
    </location>
</feature>
<feature type="chain" id="PRO_0000085248" description="Protein Nef">
    <location>
        <begin position="2"/>
        <end position="263"/>
    </location>
</feature>
<feature type="region of interest" description="Acidic">
    <location>
        <begin position="88"/>
        <end position="96"/>
    </location>
</feature>
<feature type="region of interest" description="Mediates dimerization" evidence="1">
    <location>
        <begin position="140"/>
        <end position="156"/>
    </location>
</feature>
<feature type="lipid moiety-binding region" description="N-myristoyl glycine; by host" evidence="1">
    <location>
        <position position="2"/>
    </location>
</feature>
<sequence length="263" mass="30360">MGGAISKKQYKRGGNLRERLLQARGETYGRLWEGLEEGYSQSLGASGKGLSSLSCEPQKYSEGQYMNTPWRNPATERAKLGYRQQNMDDVDDEDDDLIGVSVHPRVPLRAMTYKLAIDMSHFIKEKGGLEGIYYNERRHRILDMYLEKEEGIIPDWQNYTSGPGIRYPMHYGWLWKLVPVDVSDEAQEDETHCLVHPAQTYQWDDPWGEVLAWKFDPELAYSYKAFIKYPEEFGSKSGLSEEEVKRRLTARGLLKMADKKETS</sequence>
<evidence type="ECO:0000250" key="1"/>
<evidence type="ECO:0000269" key="2">
    <source>
    </source>
</evidence>
<evidence type="ECO:0000269" key="3">
    <source>
    </source>
</evidence>
<evidence type="ECO:0000305" key="4"/>
<evidence type="ECO:0000305" key="5">
    <source>
    </source>
</evidence>
<accession>P12482</accession>